<protein>
    <recommendedName>
        <fullName evidence="1">tRNA N6-adenosine threonylcarbamoyltransferase, mitochondrial</fullName>
        <ecNumber evidence="1 8">2.3.1.234</ecNumber>
    </recommendedName>
    <alternativeName>
        <fullName evidence="1">N6-L-threonylcarbamoyladenine synthase</fullName>
        <shortName evidence="1">t(6)A synthase</shortName>
    </alternativeName>
    <alternativeName>
        <fullName evidence="1">t(6)A37 threonylcarbamoyladenosine biosynthesis protein QRI7</fullName>
    </alternativeName>
    <alternativeName>
        <fullName evidence="1">tRNA threonylcarbamoyladenosine biosynthesis protein QRI7</fullName>
    </alternativeName>
</protein>
<organism>
    <name type="scientific">Saccharomyces cerevisiae (strain ATCC 204508 / S288c)</name>
    <name type="common">Baker's yeast</name>
    <dbReference type="NCBI Taxonomy" id="559292"/>
    <lineage>
        <taxon>Eukaryota</taxon>
        <taxon>Fungi</taxon>
        <taxon>Dikarya</taxon>
        <taxon>Ascomycota</taxon>
        <taxon>Saccharomycotina</taxon>
        <taxon>Saccharomycetes</taxon>
        <taxon>Saccharomycetales</taxon>
        <taxon>Saccharomycetaceae</taxon>
        <taxon>Saccharomyces</taxon>
    </lineage>
</organism>
<accession>P43122</accession>
<accession>D6VRP6</accession>
<sequence length="407" mass="45543">MISIKGTGRFLLDNYRIWQRRAFNRPIQLRKGYKVLAIETSCDDTCVSVLDRFSKSAAPNVLANLKDTLDSIDEGGIIPTKAHIHHQARIGPLTERALIESNAREGIDLICVTRGPGMPGSLSGGLDFAKGLAVAWNKPLIGVHHMLGHLLIPRMGTNGKVPQFPFVSLLVSGGHTTFVLSRAIDDHEILCDTIDIAVGDSLDKCGRELGFKGTMIAREMEKFINQDINDQDFALKLEMPSPLKNSASKRNMLSFSFSAFITALRTNLTKLGKTEIQELPEREIRSIAYQVQESVFDHIINKLKHVLKSQPEKFKNVREFVCSGGVSSNQRLRTKLETELGTLNSTSFFNFYYPPMDLCSDNSIMIGWAGIEIWESLRLVSDLDICPIRQWPLNDLLSVDGWRTDQL</sequence>
<reference key="1">
    <citation type="journal article" date="1994" name="Yeast">
        <title>Sequence of the PHO2-POL3 (CDC2) region of chromosome IV of Saccharomyces cerevisiae.</title>
        <authorList>
            <person name="Simon M."/>
            <person name="Benit P."/>
            <person name="Vassal A."/>
            <person name="Dubois C."/>
            <person name="Faye G."/>
        </authorList>
    </citation>
    <scope>NUCLEOTIDE SEQUENCE [GENOMIC DNA]</scope>
</reference>
<reference key="2">
    <citation type="journal article" date="1996" name="Yeast">
        <title>The sequence of a 20.3 kb DNA fragment from the left arm of Saccharomyces cerevisiae chromosome IV contains the KIN28, MSS2, PHO2, POL3 and DUN1 genes, and six new open reading frames.</title>
        <authorList>
            <person name="Saiz J.E."/>
            <person name="Buitrago M.J."/>
            <person name="Garcia R."/>
            <person name="Revuelta J.L."/>
            <person name="del Rey F."/>
        </authorList>
    </citation>
    <scope>NUCLEOTIDE SEQUENCE [GENOMIC DNA]</scope>
    <source>
        <strain>ATCC 96604 / S288c / FY1679</strain>
    </source>
</reference>
<reference key="3">
    <citation type="journal article" date="1997" name="Nature">
        <title>The nucleotide sequence of Saccharomyces cerevisiae chromosome IV.</title>
        <authorList>
            <person name="Jacq C."/>
            <person name="Alt-Moerbe J."/>
            <person name="Andre B."/>
            <person name="Arnold W."/>
            <person name="Bahr A."/>
            <person name="Ballesta J.P.G."/>
            <person name="Bargues M."/>
            <person name="Baron L."/>
            <person name="Becker A."/>
            <person name="Biteau N."/>
            <person name="Bloecker H."/>
            <person name="Blugeon C."/>
            <person name="Boskovic J."/>
            <person name="Brandt P."/>
            <person name="Brueckner M."/>
            <person name="Buitrago M.J."/>
            <person name="Coster F."/>
            <person name="Delaveau T."/>
            <person name="del Rey F."/>
            <person name="Dujon B."/>
            <person name="Eide L.G."/>
            <person name="Garcia-Cantalejo J.M."/>
            <person name="Goffeau A."/>
            <person name="Gomez-Peris A."/>
            <person name="Granotier C."/>
            <person name="Hanemann V."/>
            <person name="Hankeln T."/>
            <person name="Hoheisel J.D."/>
            <person name="Jaeger W."/>
            <person name="Jimenez A."/>
            <person name="Jonniaux J.-L."/>
            <person name="Kraemer C."/>
            <person name="Kuester H."/>
            <person name="Laamanen P."/>
            <person name="Legros Y."/>
            <person name="Louis E.J."/>
            <person name="Moeller-Rieker S."/>
            <person name="Monnet A."/>
            <person name="Moro M."/>
            <person name="Mueller-Auer S."/>
            <person name="Nussbaumer B."/>
            <person name="Paricio N."/>
            <person name="Paulin L."/>
            <person name="Perea J."/>
            <person name="Perez-Alonso M."/>
            <person name="Perez-Ortin J.E."/>
            <person name="Pohl T.M."/>
            <person name="Prydz H."/>
            <person name="Purnelle B."/>
            <person name="Rasmussen S.W."/>
            <person name="Remacha M.A."/>
            <person name="Revuelta J.L."/>
            <person name="Rieger M."/>
            <person name="Salom D."/>
            <person name="Saluz H.P."/>
            <person name="Saiz J.E."/>
            <person name="Saren A.-M."/>
            <person name="Schaefer M."/>
            <person name="Scharfe M."/>
            <person name="Schmidt E.R."/>
            <person name="Schneider C."/>
            <person name="Scholler P."/>
            <person name="Schwarz S."/>
            <person name="Soler-Mira A."/>
            <person name="Urrestarazu L.A."/>
            <person name="Verhasselt P."/>
            <person name="Vissers S."/>
            <person name="Voet M."/>
            <person name="Volckaert G."/>
            <person name="Wagner G."/>
            <person name="Wambutt R."/>
            <person name="Wedler E."/>
            <person name="Wedler H."/>
            <person name="Woelfl S."/>
            <person name="Harris D.E."/>
            <person name="Bowman S."/>
            <person name="Brown D."/>
            <person name="Churcher C.M."/>
            <person name="Connor R."/>
            <person name="Dedman K."/>
            <person name="Gentles S."/>
            <person name="Hamlin N."/>
            <person name="Hunt S."/>
            <person name="Jones L."/>
            <person name="McDonald S."/>
            <person name="Murphy L.D."/>
            <person name="Niblett D."/>
            <person name="Odell C."/>
            <person name="Oliver K."/>
            <person name="Rajandream M.A."/>
            <person name="Richards C."/>
            <person name="Shore L."/>
            <person name="Walsh S.V."/>
            <person name="Barrell B.G."/>
            <person name="Dietrich F.S."/>
            <person name="Mulligan J.T."/>
            <person name="Allen E."/>
            <person name="Araujo R."/>
            <person name="Aviles E."/>
            <person name="Berno A."/>
            <person name="Carpenter J."/>
            <person name="Chen E."/>
            <person name="Cherry J.M."/>
            <person name="Chung E."/>
            <person name="Duncan M."/>
            <person name="Hunicke-Smith S."/>
            <person name="Hyman R.W."/>
            <person name="Komp C."/>
            <person name="Lashkari D."/>
            <person name="Lew H."/>
            <person name="Lin D."/>
            <person name="Mosedale D."/>
            <person name="Nakahara K."/>
            <person name="Namath A."/>
            <person name="Oefner P."/>
            <person name="Oh C."/>
            <person name="Petel F.X."/>
            <person name="Roberts D."/>
            <person name="Schramm S."/>
            <person name="Schroeder M."/>
            <person name="Shogren T."/>
            <person name="Shroff N."/>
            <person name="Winant A."/>
            <person name="Yelton M.A."/>
            <person name="Botstein D."/>
            <person name="Davis R.W."/>
            <person name="Johnston M."/>
            <person name="Andrews S."/>
            <person name="Brinkman R."/>
            <person name="Cooper J."/>
            <person name="Ding H."/>
            <person name="Du Z."/>
            <person name="Favello A."/>
            <person name="Fulton L."/>
            <person name="Gattung S."/>
            <person name="Greco T."/>
            <person name="Hallsworth K."/>
            <person name="Hawkins J."/>
            <person name="Hillier L.W."/>
            <person name="Jier M."/>
            <person name="Johnson D."/>
            <person name="Johnston L."/>
            <person name="Kirsten J."/>
            <person name="Kucaba T."/>
            <person name="Langston Y."/>
            <person name="Latreille P."/>
            <person name="Le T."/>
            <person name="Mardis E."/>
            <person name="Menezes S."/>
            <person name="Miller N."/>
            <person name="Nhan M."/>
            <person name="Pauley A."/>
            <person name="Peluso D."/>
            <person name="Rifkin L."/>
            <person name="Riles L."/>
            <person name="Taich A."/>
            <person name="Trevaskis E."/>
            <person name="Vignati D."/>
            <person name="Wilcox L."/>
            <person name="Wohldman P."/>
            <person name="Vaudin M."/>
            <person name="Wilson R."/>
            <person name="Waterston R."/>
            <person name="Albermann K."/>
            <person name="Hani J."/>
            <person name="Heumann K."/>
            <person name="Kleine K."/>
            <person name="Mewes H.-W."/>
            <person name="Zollner A."/>
            <person name="Zaccaria P."/>
        </authorList>
    </citation>
    <scope>NUCLEOTIDE SEQUENCE [LARGE SCALE GENOMIC DNA]</scope>
    <source>
        <strain>ATCC 204508 / S288c</strain>
    </source>
</reference>
<reference key="4">
    <citation type="journal article" date="2014" name="G3 (Bethesda)">
        <title>The reference genome sequence of Saccharomyces cerevisiae: Then and now.</title>
        <authorList>
            <person name="Engel S.R."/>
            <person name="Dietrich F.S."/>
            <person name="Fisk D.G."/>
            <person name="Binkley G."/>
            <person name="Balakrishnan R."/>
            <person name="Costanzo M.C."/>
            <person name="Dwight S.S."/>
            <person name="Hitz B.C."/>
            <person name="Karra K."/>
            <person name="Nash R.S."/>
            <person name="Weng S."/>
            <person name="Wong E.D."/>
            <person name="Lloyd P."/>
            <person name="Skrzypek M.S."/>
            <person name="Miyasato S.R."/>
            <person name="Simison M."/>
            <person name="Cherry J.M."/>
        </authorList>
    </citation>
    <scope>GENOME REANNOTATION</scope>
    <source>
        <strain>ATCC 204508 / S288c</strain>
    </source>
</reference>
<reference key="5">
    <citation type="journal article" date="2003" name="Nature">
        <title>Global analysis of protein localization in budding yeast.</title>
        <authorList>
            <person name="Huh W.-K."/>
            <person name="Falvo J.V."/>
            <person name="Gerke L.C."/>
            <person name="Carroll A.S."/>
            <person name="Howson R.W."/>
            <person name="Weissman J.S."/>
            <person name="O'Shea E.K."/>
        </authorList>
    </citation>
    <scope>SUBCELLULAR LOCATION [LARGE SCALE ANALYSIS]</scope>
</reference>
<reference key="6">
    <citation type="journal article" date="2003" name="Nature">
        <title>Global analysis of protein expression in yeast.</title>
        <authorList>
            <person name="Ghaemmaghami S."/>
            <person name="Huh W.-K."/>
            <person name="Bower K."/>
            <person name="Howson R.W."/>
            <person name="Belle A."/>
            <person name="Dephoure N."/>
            <person name="O'Shea E.K."/>
            <person name="Weissman J.S."/>
        </authorList>
    </citation>
    <scope>LEVEL OF PROTEIN EXPRESSION [LARGE SCALE ANALYSIS]</scope>
</reference>
<reference key="7">
    <citation type="journal article" date="2006" name="J. Proteome Res.">
        <title>Toward the complete yeast mitochondrial proteome: multidimensional separation techniques for mitochondrial proteomics.</title>
        <authorList>
            <person name="Reinders J."/>
            <person name="Zahedi R.P."/>
            <person name="Pfanner N."/>
            <person name="Meisinger C."/>
            <person name="Sickmann A."/>
        </authorList>
    </citation>
    <scope>SUBCELLULAR LOCATION [LARGE SCALE ANALYSIS]</scope>
    <scope>IDENTIFICATION BY MASS SPECTROMETRY</scope>
</reference>
<reference key="8">
    <citation type="journal article" date="2009" name="Nucleic Acids Res.">
        <title>Qri7/OSGEPL, the mitochondrial version of the universal Kae1/YgjD protein, is essential for mitochondrial genome maintenance.</title>
        <authorList>
            <person name="Oberto J."/>
            <person name="Breuil N."/>
            <person name="Hecker A."/>
            <person name="Farina F."/>
            <person name="Brochier-Armanet C."/>
            <person name="Culetto E."/>
            <person name="Forterre P."/>
        </authorList>
    </citation>
    <scope>FUNCTION IN MITOCHONDRIAL GENOME MAINTENANCE</scope>
    <scope>DISRUPTION PHENOTYPE</scope>
</reference>
<reference key="9">
    <citation type="journal article" date="2011" name="EMBO J.">
        <title>The highly conserved KEOPS/EKC complex is essential for a universal tRNA modification, t6A.</title>
        <authorList>
            <person name="Srinivasan M."/>
            <person name="Mehta P."/>
            <person name="Yu Y."/>
            <person name="Prugar E."/>
            <person name="Koonin E.V."/>
            <person name="Karzai A.W."/>
            <person name="Sternglanz R."/>
        </authorList>
    </citation>
    <scope>FUNCTION IN T(6)A37 FORMATION</scope>
</reference>
<reference key="10">
    <citation type="journal article" date="2011" name="EMBO J.">
        <title>A role for the universal Kae1/Qri7/YgjD (COG0533) family in tRNA modification.</title>
        <authorList>
            <person name="El Yacoubi B."/>
            <person name="Hatin I."/>
            <person name="Deutsch C."/>
            <person name="Kahveci T."/>
            <person name="Rousset J.P."/>
            <person name="Iwata-Reuyl D."/>
            <person name="Murzin A.G."/>
            <person name="de Crecy-Lagard V."/>
        </authorList>
    </citation>
    <scope>FUNCTION IN T(6)A37 FORMATION</scope>
</reference>
<reference key="11">
    <citation type="journal article" date="2013" name="Nucleic Acids Res.">
        <title>Reconstitution and characterization of eukaryotic N6-threonylcarbamoylation of tRNA using a minimal enzyme system.</title>
        <authorList>
            <person name="Wan L.C."/>
            <person name="Mao D.Y."/>
            <person name="Neculai D."/>
            <person name="Strecker J."/>
            <person name="Chiovitti D."/>
            <person name="Kurinov I."/>
            <person name="Poda G."/>
            <person name="Thevakumaran N."/>
            <person name="Yuan F."/>
            <person name="Szilard R.K."/>
            <person name="Lissina E."/>
            <person name="Nislow C."/>
            <person name="Caudy A.A."/>
            <person name="Durocher D."/>
            <person name="Sicheri F."/>
        </authorList>
    </citation>
    <scope>X-RAY CRYSTALLOGRAPHY (2.88 ANGSTROMS) OF 30-407 IN COMPLEX WITH ZINC</scope>
    <scope>CATALYTIC ACTIVITY</scope>
    <scope>SUBUNIT</scope>
    <scope>SUBCELLULAR LOCATION</scope>
    <scope>MUTAGENESIS OF GLU-39; ASP-43; ASP-44; ILE-77; ARG-104; LYS-130; VAL-134; HIS-145; HIS-149; SER-172; ARG-207; SER-258 AND ASP-361</scope>
</reference>
<reference key="12">
    <citation type="journal article" date="2014" name="Acta Crystallogr. F">
        <title>Structure of Saccharomyces cerevisiae mitochondrial Qri7 in complex with AMP.</title>
        <authorList>
            <person name="Tominaga T."/>
            <person name="Kobayashi K."/>
            <person name="Ishii R."/>
            <person name="Ishitani R."/>
            <person name="Nureki O."/>
        </authorList>
    </citation>
    <scope>X-RAY CRYSTALLOGRAPHY (2.94 ANGSTROMS) OF 30-407 IN COMPLEX WITH AMP AND ZINC</scope>
    <scope>SUBUNIT</scope>
</reference>
<name>QRI7_YEAST</name>
<proteinExistence type="evidence at protein level"/>
<keyword id="KW-0002">3D-structure</keyword>
<keyword id="KW-0012">Acyltransferase</keyword>
<keyword id="KW-0479">Metal-binding</keyword>
<keyword id="KW-0496">Mitochondrion</keyword>
<keyword id="KW-1185">Reference proteome</keyword>
<keyword id="KW-0808">Transferase</keyword>
<keyword id="KW-0809">Transit peptide</keyword>
<keyword id="KW-0819">tRNA processing</keyword>
<comment type="function">
    <text evidence="1 5 6 7">Required for the formation of a threonylcarbamoyl group on adenosine at position 37 (t(6)A37) in mitochondrial tRNAs that read codons beginning with adenine. Probably involved in the transfer of the threonylcarbamoyl moiety of threonylcarbamoyl-AMP (TC-AMP) to the N6 group of A37. Involved in mitochondrial genome maintenance.</text>
</comment>
<comment type="catalytic activity">
    <reaction evidence="1 8">
        <text>L-threonylcarbamoyladenylate + adenosine(37) in tRNA = N(6)-L-threonylcarbamoyladenosine(37) in tRNA + AMP + H(+)</text>
        <dbReference type="Rhea" id="RHEA:37059"/>
        <dbReference type="Rhea" id="RHEA-COMP:10162"/>
        <dbReference type="Rhea" id="RHEA-COMP:10163"/>
        <dbReference type="ChEBI" id="CHEBI:15378"/>
        <dbReference type="ChEBI" id="CHEBI:73682"/>
        <dbReference type="ChEBI" id="CHEBI:74411"/>
        <dbReference type="ChEBI" id="CHEBI:74418"/>
        <dbReference type="ChEBI" id="CHEBI:456215"/>
        <dbReference type="EC" id="2.3.1.234"/>
    </reaction>
</comment>
<comment type="cofactor">
    <cofactor evidence="1 8 9">
        <name>a divalent metal cation</name>
        <dbReference type="ChEBI" id="CHEBI:60240"/>
    </cofactor>
    <text evidence="1 8 9">Binds 1 divalent metal cation per subunit.</text>
</comment>
<comment type="subunit">
    <text evidence="1 8 9">Homodimer.</text>
</comment>
<comment type="subcellular location">
    <subcellularLocation>
        <location evidence="1 2 4 8">Mitochondrion</location>
    </subcellularLocation>
</comment>
<comment type="disruption phenotype">
    <text evidence="5">Loss of QRI7 leads to the formation of mitochondria with abnormal morphology and no DNA.</text>
</comment>
<comment type="miscellaneous">
    <text evidence="3">Present with 1400 molecules/cell in log phase SD medium.</text>
</comment>
<comment type="similarity">
    <text evidence="1">Belongs to the KAE1 / TsaD family.</text>
</comment>
<gene>
    <name type="primary">QRI7</name>
    <name type="ordered locus">YDL104C</name>
    <name type="ORF">D2366</name>
</gene>
<evidence type="ECO:0000255" key="1">
    <source>
        <dbReference type="HAMAP-Rule" id="MF_03179"/>
    </source>
</evidence>
<evidence type="ECO:0000269" key="2">
    <source>
    </source>
</evidence>
<evidence type="ECO:0000269" key="3">
    <source>
    </source>
</evidence>
<evidence type="ECO:0000269" key="4">
    <source>
    </source>
</evidence>
<evidence type="ECO:0000269" key="5">
    <source>
    </source>
</evidence>
<evidence type="ECO:0000269" key="6">
    <source>
    </source>
</evidence>
<evidence type="ECO:0000269" key="7">
    <source>
    </source>
</evidence>
<evidence type="ECO:0000269" key="8">
    <source>
    </source>
</evidence>
<evidence type="ECO:0000269" key="9">
    <source>
    </source>
</evidence>
<evidence type="ECO:0007829" key="10">
    <source>
        <dbReference type="PDB" id="3WUH"/>
    </source>
</evidence>
<evidence type="ECO:0007829" key="11">
    <source>
        <dbReference type="PDB" id="4K25"/>
    </source>
</evidence>
<evidence type="ECO:0007829" key="12">
    <source>
        <dbReference type="PDB" id="6NBJ"/>
    </source>
</evidence>
<dbReference type="EC" id="2.3.1.234" evidence="1 8"/>
<dbReference type="EMBL" id="X79380">
    <property type="protein sequence ID" value="CAA55926.1"/>
    <property type="molecule type" value="Genomic_DNA"/>
</dbReference>
<dbReference type="EMBL" id="X95644">
    <property type="protein sequence ID" value="CAA64909.1"/>
    <property type="molecule type" value="Genomic_DNA"/>
</dbReference>
<dbReference type="EMBL" id="Z74152">
    <property type="protein sequence ID" value="CAA98671.1"/>
    <property type="molecule type" value="Genomic_DNA"/>
</dbReference>
<dbReference type="EMBL" id="BK006938">
    <property type="protein sequence ID" value="DAA11756.1"/>
    <property type="molecule type" value="Genomic_DNA"/>
</dbReference>
<dbReference type="PIR" id="S50740">
    <property type="entry name" value="S50740"/>
</dbReference>
<dbReference type="RefSeq" id="NP_010179.1">
    <property type="nucleotide sequence ID" value="NM_001180163.1"/>
</dbReference>
<dbReference type="PDB" id="3WUH">
    <property type="method" value="X-ray"/>
    <property type="resolution" value="2.94 A"/>
    <property type="chains" value="A/B=30-407"/>
</dbReference>
<dbReference type="PDB" id="4K25">
    <property type="method" value="X-ray"/>
    <property type="resolution" value="2.88 A"/>
    <property type="chains" value="A=30-407"/>
</dbReference>
<dbReference type="PDB" id="6NBJ">
    <property type="method" value="X-ray"/>
    <property type="resolution" value="2.94 A"/>
    <property type="chains" value="A/B=30-407"/>
</dbReference>
<dbReference type="PDBsum" id="3WUH"/>
<dbReference type="PDBsum" id="4K25"/>
<dbReference type="PDBsum" id="6NBJ"/>
<dbReference type="SMR" id="P43122"/>
<dbReference type="BioGRID" id="31958">
    <property type="interactions" value="184"/>
</dbReference>
<dbReference type="DIP" id="DIP-5028N"/>
<dbReference type="FunCoup" id="P43122">
    <property type="interactions" value="513"/>
</dbReference>
<dbReference type="IntAct" id="P43122">
    <property type="interactions" value="1"/>
</dbReference>
<dbReference type="STRING" id="4932.YDL104C"/>
<dbReference type="PaxDb" id="4932-YDL104C"/>
<dbReference type="PeptideAtlas" id="P43122"/>
<dbReference type="EnsemblFungi" id="YDL104C_mRNA">
    <property type="protein sequence ID" value="YDL104C"/>
    <property type="gene ID" value="YDL104C"/>
</dbReference>
<dbReference type="GeneID" id="851454"/>
<dbReference type="KEGG" id="sce:YDL104C"/>
<dbReference type="AGR" id="SGD:S000002262"/>
<dbReference type="SGD" id="S000002262">
    <property type="gene designation" value="QRI7"/>
</dbReference>
<dbReference type="VEuPathDB" id="FungiDB:YDL104C"/>
<dbReference type="eggNOG" id="KOG2707">
    <property type="taxonomic scope" value="Eukaryota"/>
</dbReference>
<dbReference type="GeneTree" id="ENSGT00940000153744"/>
<dbReference type="HOGENOM" id="CLU_023208_4_1_1"/>
<dbReference type="InParanoid" id="P43122"/>
<dbReference type="OMA" id="NAAMIGC"/>
<dbReference type="OrthoDB" id="10259622at2759"/>
<dbReference type="BioCyc" id="MetaCyc:YDL104C-MONOMER"/>
<dbReference type="BioCyc" id="YEAST:YDL104C-MONOMER"/>
<dbReference type="BRENDA" id="2.3.1.234">
    <property type="organism ID" value="984"/>
</dbReference>
<dbReference type="BioGRID-ORCS" id="851454">
    <property type="hits" value="0 hits in 10 CRISPR screens"/>
</dbReference>
<dbReference type="EvolutionaryTrace" id="P43122"/>
<dbReference type="PRO" id="PR:P43122"/>
<dbReference type="Proteomes" id="UP000002311">
    <property type="component" value="Chromosome IV"/>
</dbReference>
<dbReference type="RNAct" id="P43122">
    <property type="molecule type" value="protein"/>
</dbReference>
<dbReference type="GO" id="GO:0005759">
    <property type="term" value="C:mitochondrial matrix"/>
    <property type="evidence" value="ECO:0000315"/>
    <property type="project" value="FlyBase"/>
</dbReference>
<dbReference type="GO" id="GO:0005739">
    <property type="term" value="C:mitochondrion"/>
    <property type="evidence" value="ECO:0007005"/>
    <property type="project" value="SGD"/>
</dbReference>
<dbReference type="GO" id="GO:0046872">
    <property type="term" value="F:metal ion binding"/>
    <property type="evidence" value="ECO:0007669"/>
    <property type="project" value="UniProtKB-KW"/>
</dbReference>
<dbReference type="GO" id="GO:0061711">
    <property type="term" value="F:N(6)-L-threonylcarbamoyladenine synthase activity"/>
    <property type="evidence" value="ECO:0000314"/>
    <property type="project" value="SGD"/>
</dbReference>
<dbReference type="GO" id="GO:0008252">
    <property type="term" value="F:nucleotidase activity"/>
    <property type="evidence" value="ECO:0000314"/>
    <property type="project" value="SGD"/>
</dbReference>
<dbReference type="GO" id="GO:0000049">
    <property type="term" value="F:tRNA binding"/>
    <property type="evidence" value="ECO:0000314"/>
    <property type="project" value="SGD"/>
</dbReference>
<dbReference type="GO" id="GO:0072670">
    <property type="term" value="P:mitochondrial tRNA threonylcarbamoyladenosine modification"/>
    <property type="evidence" value="ECO:0000315"/>
    <property type="project" value="SGD"/>
</dbReference>
<dbReference type="GO" id="GO:0002949">
    <property type="term" value="P:tRNA threonylcarbamoyladenosine modification"/>
    <property type="evidence" value="ECO:0000314"/>
    <property type="project" value="SGD"/>
</dbReference>
<dbReference type="CDD" id="cd24097">
    <property type="entry name" value="ASKHA_NBD_TsaD-like"/>
    <property type="match status" value="1"/>
</dbReference>
<dbReference type="FunFam" id="3.30.420.40:FF:000297">
    <property type="entry name" value="tRNA N6-adenosine threonylcarbamoyltransferase, mitochondrial"/>
    <property type="match status" value="1"/>
</dbReference>
<dbReference type="FunFam" id="3.30.420.40:FF:000354">
    <property type="entry name" value="tRNA N6-adenosine threonylcarbamoyltransferase, mitochondrial"/>
    <property type="match status" value="1"/>
</dbReference>
<dbReference type="Gene3D" id="3.30.420.40">
    <property type="match status" value="2"/>
</dbReference>
<dbReference type="HAMAP" id="MF_01445">
    <property type="entry name" value="TsaD"/>
    <property type="match status" value="1"/>
</dbReference>
<dbReference type="InterPro" id="IPR043129">
    <property type="entry name" value="ATPase_NBD"/>
</dbReference>
<dbReference type="InterPro" id="IPR000905">
    <property type="entry name" value="Gcp-like_dom"/>
</dbReference>
<dbReference type="InterPro" id="IPR017861">
    <property type="entry name" value="KAE1/TsaD"/>
</dbReference>
<dbReference type="InterPro" id="IPR017860">
    <property type="entry name" value="Peptidase_M22_CS"/>
</dbReference>
<dbReference type="InterPro" id="IPR022450">
    <property type="entry name" value="TsaD"/>
</dbReference>
<dbReference type="NCBIfam" id="TIGR00329">
    <property type="entry name" value="gcp_kae1"/>
    <property type="match status" value="1"/>
</dbReference>
<dbReference type="PANTHER" id="PTHR11735">
    <property type="entry name" value="TRNA N6-ADENOSINE THREONYLCARBAMOYLTRANSFERASE"/>
    <property type="match status" value="1"/>
</dbReference>
<dbReference type="PANTHER" id="PTHR11735:SF6">
    <property type="entry name" value="TRNA N6-ADENOSINE THREONYLCARBAMOYLTRANSFERASE, MITOCHONDRIAL"/>
    <property type="match status" value="1"/>
</dbReference>
<dbReference type="Pfam" id="PF00814">
    <property type="entry name" value="TsaD"/>
    <property type="match status" value="1"/>
</dbReference>
<dbReference type="PRINTS" id="PR00789">
    <property type="entry name" value="OSIALOPTASE"/>
</dbReference>
<dbReference type="SUPFAM" id="SSF53067">
    <property type="entry name" value="Actin-like ATPase domain"/>
    <property type="match status" value="2"/>
</dbReference>
<dbReference type="PROSITE" id="PS01016">
    <property type="entry name" value="GLYCOPROTEASE"/>
    <property type="match status" value="1"/>
</dbReference>
<feature type="transit peptide" description="Mitochondrion" evidence="1">
    <location>
        <begin position="1"/>
        <end position="30"/>
    </location>
</feature>
<feature type="chain" id="PRO_0000096988" description="tRNA N6-adenosine threonylcarbamoyltransferase, mitochondrial" evidence="1">
    <location>
        <begin position="31"/>
        <end position="407"/>
    </location>
</feature>
<feature type="binding site" evidence="1 8">
    <location>
        <position position="145"/>
    </location>
    <ligand>
        <name>a divalent metal cation</name>
        <dbReference type="ChEBI" id="CHEBI:60240"/>
    </ligand>
</feature>
<feature type="binding site" evidence="1 8">
    <location>
        <position position="149"/>
    </location>
    <ligand>
        <name>a divalent metal cation</name>
        <dbReference type="ChEBI" id="CHEBI:60240"/>
    </ligand>
</feature>
<feature type="binding site" evidence="1 9">
    <location>
        <begin position="170"/>
        <end position="174"/>
    </location>
    <ligand>
        <name>substrate</name>
    </ligand>
</feature>
<feature type="binding site" evidence="1 9">
    <location>
        <position position="203"/>
    </location>
    <ligand>
        <name>substrate</name>
    </ligand>
</feature>
<feature type="binding site" evidence="1 9">
    <location>
        <position position="217"/>
    </location>
    <ligand>
        <name>substrate</name>
    </ligand>
</feature>
<feature type="binding site" evidence="1 9">
    <location>
        <position position="221"/>
    </location>
    <ligand>
        <name>substrate</name>
    </ligand>
</feature>
<feature type="binding site" evidence="1 9">
    <location>
        <begin position="328"/>
        <end position="329"/>
    </location>
    <ligand>
        <name>substrate</name>
    </ligand>
</feature>
<feature type="binding site" evidence="1 9">
    <location>
        <position position="360"/>
    </location>
    <ligand>
        <name>substrate</name>
    </ligand>
</feature>
<feature type="binding site" evidence="1 8">
    <location>
        <position position="361"/>
    </location>
    <ligand>
        <name>a divalent metal cation</name>
        <dbReference type="ChEBI" id="CHEBI:60240"/>
    </ligand>
</feature>
<feature type="mutagenesis site" description="Severely impairs t(6)A37 formation." evidence="8">
    <original>E</original>
    <variation>A</variation>
    <location>
        <position position="39"/>
    </location>
</feature>
<feature type="mutagenesis site" description="Severely impairs t(6)A37 formation. No effect on dimer formation." evidence="8">
    <original>D</original>
    <variation>A</variation>
    <location>
        <position position="43"/>
    </location>
</feature>
<feature type="mutagenesis site" description="Severely impairs t(6)A37 formation. No effect on dimer formation." evidence="8">
    <original>D</original>
    <variation>A</variation>
    <location>
        <position position="44"/>
    </location>
</feature>
<feature type="mutagenesis site" description="Severely impairs t(6)A37 formation. No effect on dimer formation." evidence="8">
    <original>I</original>
    <variation>E</variation>
    <location>
        <position position="77"/>
    </location>
</feature>
<feature type="mutagenesis site" description="Reduces enzyme activity by 35%. Partially impairs dimer formation." evidence="8">
    <original>R</original>
    <variation>A</variation>
    <location>
        <position position="104"/>
    </location>
</feature>
<feature type="mutagenesis site" description="Severely impairs t(6)A37 formation. Partially impairs dimer formation." evidence="8">
    <original>K</original>
    <variation>A</variation>
    <location>
        <position position="130"/>
    </location>
</feature>
<feature type="mutagenesis site" description="Severely impairs t(6)A37 formation. Prevents dimerization." evidence="8">
    <original>V</original>
    <variation>R</variation>
    <location>
        <position position="134"/>
    </location>
</feature>
<feature type="mutagenesis site" description="Severely impairs t(6)A37 formation." evidence="8">
    <original>H</original>
    <variation>A</variation>
    <location>
        <position position="145"/>
    </location>
</feature>
<feature type="mutagenesis site" description="Severely impairs t(6)A37 formation." evidence="8">
    <original>H</original>
    <variation>A</variation>
    <location>
        <position position="149"/>
    </location>
</feature>
<feature type="mutagenesis site" description="Severely impairs t(6)A37 formation." evidence="8">
    <original>S</original>
    <variation>K</variation>
    <location>
        <position position="172"/>
    </location>
</feature>
<feature type="mutagenesis site" description="Severely impairs t(6)A37 formation. No effect on dimer formation." evidence="8">
    <original>R</original>
    <variation>A</variation>
    <location>
        <position position="207"/>
    </location>
</feature>
<feature type="mutagenesis site" description="Severely impairs t(6)A37 formation. No effect on dimer formation." evidence="8">
    <original>S</original>
    <variation>A</variation>
    <location>
        <position position="258"/>
    </location>
</feature>
<feature type="mutagenesis site" description="Severely impairs t(6)A37 formation." evidence="8">
    <original>D</original>
    <variation>A</variation>
    <location>
        <position position="361"/>
    </location>
</feature>
<feature type="strand" evidence="11">
    <location>
        <begin position="34"/>
        <end position="39"/>
    </location>
</feature>
<feature type="strand" evidence="11">
    <location>
        <begin position="41"/>
        <end position="51"/>
    </location>
</feature>
<feature type="strand" evidence="11">
    <location>
        <begin position="60"/>
        <end position="67"/>
    </location>
</feature>
<feature type="helix" evidence="12">
    <location>
        <begin position="69"/>
        <end position="72"/>
    </location>
</feature>
<feature type="turn" evidence="12">
    <location>
        <begin position="73"/>
        <end position="76"/>
    </location>
</feature>
<feature type="helix" evidence="11">
    <location>
        <begin position="82"/>
        <end position="99"/>
    </location>
</feature>
<feature type="strand" evidence="11">
    <location>
        <begin position="100"/>
        <end position="102"/>
    </location>
</feature>
<feature type="strand" evidence="11">
    <location>
        <begin position="109"/>
        <end position="113"/>
    </location>
</feature>
<feature type="strand" evidence="11">
    <location>
        <begin position="115"/>
        <end position="117"/>
    </location>
</feature>
<feature type="helix" evidence="11">
    <location>
        <begin position="119"/>
        <end position="136"/>
    </location>
</feature>
<feature type="strand" evidence="11">
    <location>
        <begin position="140"/>
        <end position="143"/>
    </location>
</feature>
<feature type="helix" evidence="11">
    <location>
        <begin position="145"/>
        <end position="151"/>
    </location>
</feature>
<feature type="helix" evidence="11">
    <location>
        <begin position="152"/>
        <end position="154"/>
    </location>
</feature>
<feature type="turn" evidence="11">
    <location>
        <begin position="155"/>
        <end position="158"/>
    </location>
</feature>
<feature type="strand" evidence="10">
    <location>
        <begin position="160"/>
        <end position="162"/>
    </location>
</feature>
<feature type="strand" evidence="11">
    <location>
        <begin position="164"/>
        <end position="174"/>
    </location>
</feature>
<feature type="strand" evidence="11">
    <location>
        <begin position="176"/>
        <end position="185"/>
    </location>
</feature>
<feature type="strand" evidence="11">
    <location>
        <begin position="187"/>
        <end position="195"/>
    </location>
</feature>
<feature type="helix" evidence="11">
    <location>
        <begin position="198"/>
        <end position="209"/>
    </location>
</feature>
<feature type="strand" evidence="11">
    <location>
        <begin position="213"/>
        <end position="215"/>
    </location>
</feature>
<feature type="helix" evidence="11">
    <location>
        <begin position="216"/>
        <end position="224"/>
    </location>
</feature>
<feature type="strand" evidence="11">
    <location>
        <begin position="227"/>
        <end position="229"/>
    </location>
</feature>
<feature type="strand" evidence="12">
    <location>
        <begin position="245"/>
        <end position="247"/>
    </location>
</feature>
<feature type="strand" evidence="11">
    <location>
        <begin position="253"/>
        <end position="255"/>
    </location>
</feature>
<feature type="helix" evidence="11">
    <location>
        <begin position="259"/>
        <end position="270"/>
    </location>
</feature>
<feature type="turn" evidence="11">
    <location>
        <begin position="276"/>
        <end position="278"/>
    </location>
</feature>
<feature type="helix" evidence="11">
    <location>
        <begin position="281"/>
        <end position="309"/>
    </location>
</feature>
<feature type="turn" evidence="11">
    <location>
        <begin position="311"/>
        <end position="316"/>
    </location>
</feature>
<feature type="strand" evidence="11">
    <location>
        <begin position="320"/>
        <end position="325"/>
    </location>
</feature>
<feature type="helix" evidence="11">
    <location>
        <begin position="326"/>
        <end position="328"/>
    </location>
</feature>
<feature type="helix" evidence="11">
    <location>
        <begin position="330"/>
        <end position="339"/>
    </location>
</feature>
<feature type="turn" evidence="11">
    <location>
        <begin position="340"/>
        <end position="342"/>
    </location>
</feature>
<feature type="strand" evidence="11">
    <location>
        <begin position="344"/>
        <end position="346"/>
    </location>
</feature>
<feature type="strand" evidence="10">
    <location>
        <begin position="350"/>
        <end position="352"/>
    </location>
</feature>
<feature type="helix" evidence="11">
    <location>
        <begin position="356"/>
        <end position="359"/>
    </location>
</feature>
<feature type="helix" evidence="11">
    <location>
        <begin position="364"/>
        <end position="376"/>
    </location>
</feature>
<feature type="strand" evidence="11">
    <location>
        <begin position="379"/>
        <end position="381"/>
    </location>
</feature>
<feature type="turn" evidence="11">
    <location>
        <begin position="394"/>
        <end position="398"/>
    </location>
</feature>
<feature type="strand" evidence="11">
    <location>
        <begin position="402"/>
        <end position="404"/>
    </location>
</feature>